<keyword id="KW-0227">DNA damage</keyword>
<keyword id="KW-0234">DNA repair</keyword>
<keyword id="KW-0235">DNA replication</keyword>
<keyword id="KW-0255">Endonuclease</keyword>
<keyword id="KW-0269">Exonuclease</keyword>
<keyword id="KW-0378">Hydrolase</keyword>
<keyword id="KW-0460">Magnesium</keyword>
<keyword id="KW-0479">Metal-binding</keyword>
<keyword id="KW-0540">Nuclease</keyword>
<keyword id="KW-1185">Reference proteome</keyword>
<feature type="chain" id="PRO_1000061319" description="Flap endonuclease 1">
    <location>
        <begin position="1"/>
        <end position="350"/>
    </location>
</feature>
<feature type="region of interest" description="N-domain">
    <location>
        <begin position="1"/>
        <end position="102"/>
    </location>
</feature>
<feature type="region of interest" description="I-domain">
    <location>
        <begin position="120"/>
        <end position="261"/>
    </location>
</feature>
<feature type="region of interest" description="Interaction with PCNA" evidence="2">
    <location>
        <begin position="339"/>
        <end position="347"/>
    </location>
</feature>
<feature type="binding site" evidence="2">
    <location>
        <position position="31"/>
    </location>
    <ligand>
        <name>Mg(2+)</name>
        <dbReference type="ChEBI" id="CHEBI:18420"/>
        <label>1</label>
    </ligand>
</feature>
<feature type="binding site" evidence="2">
    <location>
        <position position="84"/>
    </location>
    <ligand>
        <name>Mg(2+)</name>
        <dbReference type="ChEBI" id="CHEBI:18420"/>
        <label>1</label>
    </ligand>
</feature>
<feature type="binding site" evidence="2">
    <location>
        <position position="156"/>
    </location>
    <ligand>
        <name>Mg(2+)</name>
        <dbReference type="ChEBI" id="CHEBI:18420"/>
        <label>1</label>
    </ligand>
</feature>
<feature type="binding site" evidence="2">
    <location>
        <position position="158"/>
    </location>
    <ligand>
        <name>Mg(2+)</name>
        <dbReference type="ChEBI" id="CHEBI:18420"/>
        <label>1</label>
    </ligand>
</feature>
<feature type="binding site" evidence="2">
    <location>
        <position position="177"/>
    </location>
    <ligand>
        <name>Mg(2+)</name>
        <dbReference type="ChEBI" id="CHEBI:18420"/>
        <label>2</label>
    </ligand>
</feature>
<feature type="binding site" evidence="2">
    <location>
        <position position="179"/>
    </location>
    <ligand>
        <name>Mg(2+)</name>
        <dbReference type="ChEBI" id="CHEBI:18420"/>
        <label>2</label>
    </ligand>
</feature>
<feature type="binding site" evidence="2">
    <location>
        <position position="240"/>
    </location>
    <ligand>
        <name>Mg(2+)</name>
        <dbReference type="ChEBI" id="CHEBI:18420"/>
        <label>2</label>
    </ligand>
</feature>
<organism>
    <name type="scientific">Ignicoccus hospitalis (strain KIN4/I / DSM 18386 / JCM 14125)</name>
    <dbReference type="NCBI Taxonomy" id="453591"/>
    <lineage>
        <taxon>Archaea</taxon>
        <taxon>Thermoproteota</taxon>
        <taxon>Thermoprotei</taxon>
        <taxon>Desulfurococcales</taxon>
        <taxon>Desulfurococcaceae</taxon>
        <taxon>Ignicoccus</taxon>
    </lineage>
</organism>
<protein>
    <recommendedName>
        <fullName evidence="2">Flap endonuclease 1</fullName>
        <shortName evidence="2">FEN-1</shortName>
        <ecNumber evidence="2">3.1.-.-</ecNumber>
    </recommendedName>
    <alternativeName>
        <fullName evidence="2">Flap structure-specific endonuclease 1</fullName>
    </alternativeName>
</protein>
<gene>
    <name evidence="2" type="primary">fen</name>
    <name type="ordered locus">Igni_0691</name>
</gene>
<comment type="function">
    <text evidence="1">Structure-specific nuclease with 5'-flap endonuclease and 5'-3' exonuclease activities involved in DNA replication and repair. During DNA replication, cleaves the 5'-overhanging flap structure that is generated by displacement synthesis when DNA polymerase encounters the 5'-end of a downstream Okazaki fragment. Binds the unpaired 3'-DNA end and kinks the DNA to facilitate 5' cleavage specificity. Cleaves one nucleotide into the double-stranded DNA from the junction in flap DNA, leaving a nick for ligation. Also involved in the base excision repair (BER) pathway. Acts as a genome stabilization factor that prevents flaps from equilibrating into structures that lead to duplications and deletions. Also possesses 5'-3' exonuclease activity on nicked or gapped double-stranded DNA (By similarity).</text>
</comment>
<comment type="cofactor">
    <cofactor evidence="2">
        <name>Mg(2+)</name>
        <dbReference type="ChEBI" id="CHEBI:18420"/>
    </cofactor>
    <text evidence="2">Binds 2 magnesium ions per subunit. They probably participate in the reaction catalyzed by the enzyme. May bind an additional third magnesium ion after substrate binding.</text>
</comment>
<comment type="subunit">
    <text evidence="2">Interacts with PCNA. PCNA stimulates the nuclease activity without altering cleavage specificity.</text>
</comment>
<comment type="similarity">
    <text evidence="2">Belongs to the XPG/RAD2 endonuclease family. FEN1 subfamily.</text>
</comment>
<accession>A8AAC1</accession>
<reference key="1">
    <citation type="journal article" date="2008" name="Genome Biol.">
        <title>A genomic analysis of the archaeal system Ignicoccus hospitalis-Nanoarchaeum equitans.</title>
        <authorList>
            <person name="Podar M."/>
            <person name="Anderson I."/>
            <person name="Makarova K.S."/>
            <person name="Elkins J.G."/>
            <person name="Ivanova N."/>
            <person name="Wall M.A."/>
            <person name="Lykidis A."/>
            <person name="Mavromatis K."/>
            <person name="Sun H."/>
            <person name="Hudson M.E."/>
            <person name="Chen W."/>
            <person name="Deciu C."/>
            <person name="Hutchison D."/>
            <person name="Eads J.R."/>
            <person name="Anderson A."/>
            <person name="Fernandes F."/>
            <person name="Szeto E."/>
            <person name="Lapidus A."/>
            <person name="Kyrpides N.C."/>
            <person name="Saier M.H. Jr."/>
            <person name="Richardson P.M."/>
            <person name="Rachel R."/>
            <person name="Huber H."/>
            <person name="Eisen J.A."/>
            <person name="Koonin E.V."/>
            <person name="Keller M."/>
            <person name="Stetter K.O."/>
        </authorList>
    </citation>
    <scope>NUCLEOTIDE SEQUENCE [LARGE SCALE GENOMIC DNA]</scope>
    <source>
        <strain>KIN4/I / DSM 18386 / JCM 14125</strain>
    </source>
</reference>
<sequence length="350" mass="39910">MGVTALRELIPSKCKKTLELKSLSNKSVALDAYNTLYQFLAAIRGEDGRPLMDSKGRVTSHLSGLFYRTINMLENGIKVAYVFDGAPPKLKTREIERRQKLKQEAEKKYEEAVRRGDVEEARKYAQMSAKLTKEMVEEAKRLLEAMGVPWVQAPSEGEAQAAYMAAKGDVWASASQDYDSLLFGSPRLVRNLAVSGRRKLPNKNVYVEVKPEEITLKCVLEELGITREQLVAIAVLIGTDYTPGVKGVGPKTALRYVKSYGDLERVLTALGVDDKELYLEAYNFFLNPQVTDDYELVWRRPDPQKIIEILVYEHDFNEERVRKAIERLMKAWKEKLSTKQSTLDMFFKKR</sequence>
<proteinExistence type="inferred from homology"/>
<evidence type="ECO:0000250" key="1"/>
<evidence type="ECO:0000255" key="2">
    <source>
        <dbReference type="HAMAP-Rule" id="MF_00614"/>
    </source>
</evidence>
<dbReference type="EC" id="3.1.-.-" evidence="2"/>
<dbReference type="EMBL" id="CP000816">
    <property type="protein sequence ID" value="ABU81873.1"/>
    <property type="molecule type" value="Genomic_DNA"/>
</dbReference>
<dbReference type="RefSeq" id="WP_011998725.1">
    <property type="nucleotide sequence ID" value="NC_009776.1"/>
</dbReference>
<dbReference type="SMR" id="A8AAC1"/>
<dbReference type="STRING" id="453591.Igni_0691"/>
<dbReference type="GeneID" id="5562892"/>
<dbReference type="KEGG" id="iho:Igni_0691"/>
<dbReference type="eggNOG" id="arCOG04050">
    <property type="taxonomic scope" value="Archaea"/>
</dbReference>
<dbReference type="HOGENOM" id="CLU_032444_0_0_2"/>
<dbReference type="OrthoDB" id="9593at2157"/>
<dbReference type="PhylomeDB" id="A8AAC1"/>
<dbReference type="Proteomes" id="UP000000262">
    <property type="component" value="Chromosome"/>
</dbReference>
<dbReference type="GO" id="GO:0008409">
    <property type="term" value="F:5'-3' exonuclease activity"/>
    <property type="evidence" value="ECO:0007669"/>
    <property type="project" value="UniProtKB-UniRule"/>
</dbReference>
<dbReference type="GO" id="GO:0017108">
    <property type="term" value="F:5'-flap endonuclease activity"/>
    <property type="evidence" value="ECO:0007669"/>
    <property type="project" value="UniProtKB-UniRule"/>
</dbReference>
<dbReference type="GO" id="GO:0003677">
    <property type="term" value="F:DNA binding"/>
    <property type="evidence" value="ECO:0007669"/>
    <property type="project" value="UniProtKB-UniRule"/>
</dbReference>
<dbReference type="GO" id="GO:0000287">
    <property type="term" value="F:magnesium ion binding"/>
    <property type="evidence" value="ECO:0007669"/>
    <property type="project" value="UniProtKB-UniRule"/>
</dbReference>
<dbReference type="GO" id="GO:0006281">
    <property type="term" value="P:DNA repair"/>
    <property type="evidence" value="ECO:0007669"/>
    <property type="project" value="UniProtKB-UniRule"/>
</dbReference>
<dbReference type="GO" id="GO:0043137">
    <property type="term" value="P:DNA replication, removal of RNA primer"/>
    <property type="evidence" value="ECO:0007669"/>
    <property type="project" value="UniProtKB-UniRule"/>
</dbReference>
<dbReference type="CDD" id="cd09903">
    <property type="entry name" value="H3TH_FEN1-Arc"/>
    <property type="match status" value="1"/>
</dbReference>
<dbReference type="CDD" id="cd09867">
    <property type="entry name" value="PIN_FEN1"/>
    <property type="match status" value="1"/>
</dbReference>
<dbReference type="FunFam" id="3.40.50.1010:FF:000016">
    <property type="entry name" value="Flap endonuclease 1"/>
    <property type="match status" value="1"/>
</dbReference>
<dbReference type="Gene3D" id="1.10.150.20">
    <property type="entry name" value="5' to 3' exonuclease, C-terminal subdomain"/>
    <property type="match status" value="1"/>
</dbReference>
<dbReference type="Gene3D" id="3.40.50.1010">
    <property type="entry name" value="5'-nuclease"/>
    <property type="match status" value="1"/>
</dbReference>
<dbReference type="HAMAP" id="MF_00614">
    <property type="entry name" value="Fen"/>
    <property type="match status" value="1"/>
</dbReference>
<dbReference type="InterPro" id="IPR036279">
    <property type="entry name" value="5-3_exonuclease_C_sf"/>
</dbReference>
<dbReference type="InterPro" id="IPR023426">
    <property type="entry name" value="Flap_endonuc"/>
</dbReference>
<dbReference type="InterPro" id="IPR019973">
    <property type="entry name" value="Flap_endonuc_arc"/>
</dbReference>
<dbReference type="InterPro" id="IPR008918">
    <property type="entry name" value="HhH2"/>
</dbReference>
<dbReference type="InterPro" id="IPR029060">
    <property type="entry name" value="PIN-like_dom_sf"/>
</dbReference>
<dbReference type="InterPro" id="IPR006086">
    <property type="entry name" value="XPG-I_dom"/>
</dbReference>
<dbReference type="InterPro" id="IPR006084">
    <property type="entry name" value="XPG/Rad2"/>
</dbReference>
<dbReference type="InterPro" id="IPR019974">
    <property type="entry name" value="XPG_CS"/>
</dbReference>
<dbReference type="InterPro" id="IPR006085">
    <property type="entry name" value="XPG_DNA_repair_N"/>
</dbReference>
<dbReference type="NCBIfam" id="TIGR03674">
    <property type="entry name" value="fen_arch"/>
    <property type="match status" value="1"/>
</dbReference>
<dbReference type="PANTHER" id="PTHR11081:SF9">
    <property type="entry name" value="FLAP ENDONUCLEASE 1"/>
    <property type="match status" value="1"/>
</dbReference>
<dbReference type="PANTHER" id="PTHR11081">
    <property type="entry name" value="FLAP ENDONUCLEASE FAMILY MEMBER"/>
    <property type="match status" value="1"/>
</dbReference>
<dbReference type="Pfam" id="PF00867">
    <property type="entry name" value="XPG_I"/>
    <property type="match status" value="1"/>
</dbReference>
<dbReference type="Pfam" id="PF00752">
    <property type="entry name" value="XPG_N"/>
    <property type="match status" value="1"/>
</dbReference>
<dbReference type="PRINTS" id="PR00853">
    <property type="entry name" value="XPGRADSUPER"/>
</dbReference>
<dbReference type="SMART" id="SM00279">
    <property type="entry name" value="HhH2"/>
    <property type="match status" value="1"/>
</dbReference>
<dbReference type="SMART" id="SM00484">
    <property type="entry name" value="XPGI"/>
    <property type="match status" value="1"/>
</dbReference>
<dbReference type="SMART" id="SM00485">
    <property type="entry name" value="XPGN"/>
    <property type="match status" value="1"/>
</dbReference>
<dbReference type="SUPFAM" id="SSF47807">
    <property type="entry name" value="5' to 3' exonuclease, C-terminal subdomain"/>
    <property type="match status" value="1"/>
</dbReference>
<dbReference type="SUPFAM" id="SSF88723">
    <property type="entry name" value="PIN domain-like"/>
    <property type="match status" value="1"/>
</dbReference>
<dbReference type="PROSITE" id="PS00841">
    <property type="entry name" value="XPG_1"/>
    <property type="match status" value="1"/>
</dbReference>
<name>FEN_IGNH4</name>